<comment type="function">
    <text evidence="3 4 5">Transcription factor that regulates the expression of the gene clusters that mediate the biosynthesis of trypacidin, a metabolite with antiprotozoal activity and a possible role in the infection process (PubMed:26242966, PubMed:26278536). Trypacidin is toxic for human pulmonary and bronchial epithelial cells by initiating the intracellular formation of nitric oxide (NO) and hydrogen peroxide (H(2)O(2)), thus triggering host necrotic cell death (PubMed:22319557).</text>
</comment>
<comment type="subcellular location">
    <subcellularLocation>
        <location evidence="1">Nucleus</location>
    </subcellularLocation>
</comment>
<comment type="tissue specificity">
    <text evidence="8">Specifically expressed in conidia (PubMed:22319557).</text>
</comment>
<comment type="induction">
    <text evidence="4">Expression is positively regulated by the transcription factors brlA and laeA (PubMed:26242966).</text>
</comment>
<comment type="disruption phenotype">
    <text evidence="4">Resulted in loss of trypacidin and questin production (PubMed:26242966).</text>
</comment>
<accession>Q4WQZ3</accession>
<reference key="1">
    <citation type="journal article" date="2005" name="Nature">
        <title>Genomic sequence of the pathogenic and allergenic filamentous fungus Aspergillus fumigatus.</title>
        <authorList>
            <person name="Nierman W.C."/>
            <person name="Pain A."/>
            <person name="Anderson M.J."/>
            <person name="Wortman J.R."/>
            <person name="Kim H.S."/>
            <person name="Arroyo J."/>
            <person name="Berriman M."/>
            <person name="Abe K."/>
            <person name="Archer D.B."/>
            <person name="Bermejo C."/>
            <person name="Bennett J.W."/>
            <person name="Bowyer P."/>
            <person name="Chen D."/>
            <person name="Collins M."/>
            <person name="Coulsen R."/>
            <person name="Davies R."/>
            <person name="Dyer P.S."/>
            <person name="Farman M.L."/>
            <person name="Fedorova N."/>
            <person name="Fedorova N.D."/>
            <person name="Feldblyum T.V."/>
            <person name="Fischer R."/>
            <person name="Fosker N."/>
            <person name="Fraser A."/>
            <person name="Garcia J.L."/>
            <person name="Garcia M.J."/>
            <person name="Goble A."/>
            <person name="Goldman G.H."/>
            <person name="Gomi K."/>
            <person name="Griffith-Jones S."/>
            <person name="Gwilliam R."/>
            <person name="Haas B.J."/>
            <person name="Haas H."/>
            <person name="Harris D.E."/>
            <person name="Horiuchi H."/>
            <person name="Huang J."/>
            <person name="Humphray S."/>
            <person name="Jimenez J."/>
            <person name="Keller N."/>
            <person name="Khouri H."/>
            <person name="Kitamoto K."/>
            <person name="Kobayashi T."/>
            <person name="Konzack S."/>
            <person name="Kulkarni R."/>
            <person name="Kumagai T."/>
            <person name="Lafton A."/>
            <person name="Latge J.-P."/>
            <person name="Li W."/>
            <person name="Lord A."/>
            <person name="Lu C."/>
            <person name="Majoros W.H."/>
            <person name="May G.S."/>
            <person name="Miller B.L."/>
            <person name="Mohamoud Y."/>
            <person name="Molina M."/>
            <person name="Monod M."/>
            <person name="Mouyna I."/>
            <person name="Mulligan S."/>
            <person name="Murphy L.D."/>
            <person name="O'Neil S."/>
            <person name="Paulsen I."/>
            <person name="Penalva M.A."/>
            <person name="Pertea M."/>
            <person name="Price C."/>
            <person name="Pritchard B.L."/>
            <person name="Quail M.A."/>
            <person name="Rabbinowitsch E."/>
            <person name="Rawlins N."/>
            <person name="Rajandream M.A."/>
            <person name="Reichard U."/>
            <person name="Renauld H."/>
            <person name="Robson G.D."/>
            <person name="Rodriguez de Cordoba S."/>
            <person name="Rodriguez-Pena J.M."/>
            <person name="Ronning C.M."/>
            <person name="Rutter S."/>
            <person name="Salzberg S.L."/>
            <person name="Sanchez M."/>
            <person name="Sanchez-Ferrero J.C."/>
            <person name="Saunders D."/>
            <person name="Seeger K."/>
            <person name="Squares R."/>
            <person name="Squares S."/>
            <person name="Takeuchi M."/>
            <person name="Tekaia F."/>
            <person name="Turner G."/>
            <person name="Vazquez de Aldana C.R."/>
            <person name="Weidman J."/>
            <person name="White O."/>
            <person name="Woodward J.R."/>
            <person name="Yu J.-H."/>
            <person name="Fraser C.M."/>
            <person name="Galagan J.E."/>
            <person name="Asai K."/>
            <person name="Machida M."/>
            <person name="Hall N."/>
            <person name="Barrell B.G."/>
            <person name="Denning D.W."/>
        </authorList>
    </citation>
    <scope>NUCLEOTIDE SEQUENCE [LARGE SCALE GENOMIC DNA]</scope>
    <source>
        <strain>ATCC MYA-4609 / CBS 101355 / FGSC A1100 / Af293</strain>
    </source>
</reference>
<reference key="2">
    <citation type="journal article" date="2012" name="PLoS ONE">
        <title>Trypacidin, a spore-borne toxin from Aspergillus fumigatus, is cytotoxic to lung cells.</title>
        <authorList>
            <person name="Gauthier T."/>
            <person name="Wang X."/>
            <person name="Sifuentes Dos Santos J."/>
            <person name="Fysikopoulos A."/>
            <person name="Tadrist S."/>
            <person name="Canlet C."/>
            <person name="Artigot M.P."/>
            <person name="Loiseau N."/>
            <person name="Oswald I.P."/>
            <person name="Puel O."/>
        </authorList>
    </citation>
    <scope>FUNCTION</scope>
    <scope>TISSUE SPECIFICITY</scope>
</reference>
<reference key="3">
    <citation type="journal article" date="2015" name="Appl. Microbiol. Biotechnol.">
        <title>Identification of the antiphagocytic trypacidin gene cluster in the human-pathogenic fungus Aspergillus fumigatus.</title>
        <authorList>
            <person name="Mattern D.J."/>
            <person name="Schoeler H."/>
            <person name="Weber J."/>
            <person name="Novohradska S."/>
            <person name="Kraibooj K."/>
            <person name="Dahse H.M."/>
            <person name="Hillmann F."/>
            <person name="Valiante V."/>
            <person name="Figge M.T."/>
            <person name="Brakhage A.A."/>
        </authorList>
    </citation>
    <scope>FUNCTION</scope>
</reference>
<reference key="4">
    <citation type="journal article" date="2016" name="Environ. Microbiol.">
        <title>Redundant synthesis of a conidial polyketide by two distinct secondary metabolite clusters in Aspergillus fumigatus.</title>
        <authorList>
            <person name="Throckmorton K."/>
            <person name="Lim F.Y."/>
            <person name="Kontoyiannis D.P."/>
            <person name="Zheng W."/>
            <person name="Keller N.P."/>
        </authorList>
    </citation>
    <scope>FUNCTION</scope>
    <scope>DISRUPTION PHENOTYPE</scope>
    <scope>INDUCTION</scope>
</reference>
<sequence>MRSPASSRRASALHRLCDSCRACGLSKVRCSKEKPTCSRCRRRGTVCEYVVTKRPGRKPDSRSEVEPEPGHLSHPLPSPESSTAISQGNLPDPDAFDPLFALPEPFDSTPELHSGPLSTVDSSLSSALTTWCPDFDDFFSFPVSTEDTLSGDRGAVYDGTIKHPPNLRRHSESPPAVPDDTIYLFGKPVDPAPPDQSLPATTTIGRRASPPSGRESEAGSRRLSCRCLIRALDLLKHFEVIRREAEIESSLPSIDAVVEVNKQTTEAITGMLQCPCSQKDGYLLVLLALIVCKILDRYAAAAIPGTEQGHDPTRRLDEGPMAGQRVLGELHCIQRVMNQLGPRLRMHGAQGASPGQAFHGTPAPLSVGLGDQLEPELHQRLSRLSSEIIRLLREAQ</sequence>
<name>TPCE_ASPFU</name>
<organism>
    <name type="scientific">Aspergillus fumigatus (strain ATCC MYA-4609 / CBS 101355 / FGSC A1100 / Af293)</name>
    <name type="common">Neosartorya fumigata</name>
    <dbReference type="NCBI Taxonomy" id="330879"/>
    <lineage>
        <taxon>Eukaryota</taxon>
        <taxon>Fungi</taxon>
        <taxon>Dikarya</taxon>
        <taxon>Ascomycota</taxon>
        <taxon>Pezizomycotina</taxon>
        <taxon>Eurotiomycetes</taxon>
        <taxon>Eurotiomycetidae</taxon>
        <taxon>Eurotiales</taxon>
        <taxon>Aspergillaceae</taxon>
        <taxon>Aspergillus</taxon>
        <taxon>Aspergillus subgen. Fumigati</taxon>
    </lineage>
</organism>
<feature type="chain" id="PRO_0000437059" description="Trypacidin cluster transcription factor">
    <location>
        <begin position="1"/>
        <end position="396"/>
    </location>
</feature>
<feature type="DNA-binding region" description="Zn(2)-C6 fungal-type" evidence="1">
    <location>
        <begin position="20"/>
        <end position="47"/>
    </location>
</feature>
<feature type="region of interest" description="Disordered" evidence="2">
    <location>
        <begin position="54"/>
        <end position="120"/>
    </location>
</feature>
<feature type="region of interest" description="Disordered" evidence="2">
    <location>
        <begin position="190"/>
        <end position="218"/>
    </location>
</feature>
<feature type="region of interest" description="Disordered" evidence="2">
    <location>
        <begin position="346"/>
        <end position="365"/>
    </location>
</feature>
<feature type="compositionally biased region" description="Basic and acidic residues" evidence="2">
    <location>
        <begin position="57"/>
        <end position="71"/>
    </location>
</feature>
<feature type="compositionally biased region" description="Low complexity" evidence="2">
    <location>
        <begin position="72"/>
        <end position="82"/>
    </location>
</feature>
<dbReference type="EMBL" id="AAHF01000005">
    <property type="protein sequence ID" value="EAL89341.2"/>
    <property type="molecule type" value="Genomic_DNA"/>
</dbReference>
<dbReference type="RefSeq" id="XP_751379.2">
    <property type="nucleotide sequence ID" value="XM_746286.2"/>
</dbReference>
<dbReference type="SMR" id="Q4WQZ3"/>
<dbReference type="STRING" id="330879.Q4WQZ3"/>
<dbReference type="EnsemblFungi" id="EAL89341">
    <property type="protein sequence ID" value="EAL89341"/>
    <property type="gene ID" value="AFUA_4G14540"/>
</dbReference>
<dbReference type="GeneID" id="3509597"/>
<dbReference type="KEGG" id="afm:AFUA_4G14540"/>
<dbReference type="VEuPathDB" id="FungiDB:Afu4g14540"/>
<dbReference type="eggNOG" id="ENOG502SUW5">
    <property type="taxonomic scope" value="Eukaryota"/>
</dbReference>
<dbReference type="HOGENOM" id="CLU_031656_1_0_1"/>
<dbReference type="InParanoid" id="Q4WQZ3"/>
<dbReference type="OMA" id="NCAFAKV"/>
<dbReference type="OrthoDB" id="2943660at2759"/>
<dbReference type="Proteomes" id="UP000002530">
    <property type="component" value="Chromosome 4"/>
</dbReference>
<dbReference type="GO" id="GO:0005634">
    <property type="term" value="C:nucleus"/>
    <property type="evidence" value="ECO:0007669"/>
    <property type="project" value="UniProtKB-SubCell"/>
</dbReference>
<dbReference type="GO" id="GO:0003677">
    <property type="term" value="F:DNA binding"/>
    <property type="evidence" value="ECO:0007669"/>
    <property type="project" value="UniProtKB-KW"/>
</dbReference>
<dbReference type="GO" id="GO:0000981">
    <property type="term" value="F:DNA-binding transcription factor activity, RNA polymerase II-specific"/>
    <property type="evidence" value="ECO:0007669"/>
    <property type="project" value="InterPro"/>
</dbReference>
<dbReference type="GO" id="GO:0008270">
    <property type="term" value="F:zinc ion binding"/>
    <property type="evidence" value="ECO:0007669"/>
    <property type="project" value="InterPro"/>
</dbReference>
<dbReference type="GO" id="GO:0045122">
    <property type="term" value="P:aflatoxin biosynthetic process"/>
    <property type="evidence" value="ECO:0007669"/>
    <property type="project" value="InterPro"/>
</dbReference>
<dbReference type="GO" id="GO:0044550">
    <property type="term" value="P:secondary metabolite biosynthetic process"/>
    <property type="evidence" value="ECO:0000315"/>
    <property type="project" value="AspGD"/>
</dbReference>
<dbReference type="CDD" id="cd00067">
    <property type="entry name" value="GAL4"/>
    <property type="match status" value="1"/>
</dbReference>
<dbReference type="Gene3D" id="4.10.240.10">
    <property type="entry name" value="Zn(2)-C6 fungal-type DNA-binding domain"/>
    <property type="match status" value="1"/>
</dbReference>
<dbReference type="InterPro" id="IPR013700">
    <property type="entry name" value="AflR"/>
</dbReference>
<dbReference type="InterPro" id="IPR050675">
    <property type="entry name" value="OAF3"/>
</dbReference>
<dbReference type="InterPro" id="IPR036864">
    <property type="entry name" value="Zn2-C6_fun-type_DNA-bd_sf"/>
</dbReference>
<dbReference type="InterPro" id="IPR001138">
    <property type="entry name" value="Zn2Cys6_DnaBD"/>
</dbReference>
<dbReference type="PANTHER" id="PTHR31069:SF31">
    <property type="entry name" value="MONODICTYPHENONE CLUSTER TRANSCRIPTION FACTOR-RELATED"/>
    <property type="match status" value="1"/>
</dbReference>
<dbReference type="PANTHER" id="PTHR31069">
    <property type="entry name" value="OLEATE-ACTIVATED TRANSCRIPTION FACTOR 1-RELATED"/>
    <property type="match status" value="1"/>
</dbReference>
<dbReference type="Pfam" id="PF08493">
    <property type="entry name" value="AflR"/>
    <property type="match status" value="1"/>
</dbReference>
<dbReference type="Pfam" id="PF00172">
    <property type="entry name" value="Zn_clus"/>
    <property type="match status" value="1"/>
</dbReference>
<dbReference type="PRINTS" id="PR00755">
    <property type="entry name" value="AFLATOXINBRP"/>
</dbReference>
<dbReference type="SMART" id="SM00066">
    <property type="entry name" value="GAL4"/>
    <property type="match status" value="1"/>
</dbReference>
<dbReference type="SUPFAM" id="SSF57701">
    <property type="entry name" value="Zn2/Cys6 DNA-binding domain"/>
    <property type="match status" value="1"/>
</dbReference>
<dbReference type="PROSITE" id="PS50048">
    <property type="entry name" value="ZN2_CY6_FUNGAL_2"/>
    <property type="match status" value="1"/>
</dbReference>
<keyword id="KW-0238">DNA-binding</keyword>
<keyword id="KW-0479">Metal-binding</keyword>
<keyword id="KW-0539">Nucleus</keyword>
<keyword id="KW-1185">Reference proteome</keyword>
<keyword id="KW-0804">Transcription</keyword>
<keyword id="KW-0805">Transcription regulation</keyword>
<evidence type="ECO:0000255" key="1">
    <source>
        <dbReference type="PROSITE-ProRule" id="PRU00227"/>
    </source>
</evidence>
<evidence type="ECO:0000256" key="2">
    <source>
        <dbReference type="SAM" id="MobiDB-lite"/>
    </source>
</evidence>
<evidence type="ECO:0000269" key="3">
    <source>
    </source>
</evidence>
<evidence type="ECO:0000269" key="4">
    <source>
    </source>
</evidence>
<evidence type="ECO:0000269" key="5">
    <source>
    </source>
</evidence>
<evidence type="ECO:0000303" key="6">
    <source>
    </source>
</evidence>
<evidence type="ECO:0000303" key="7">
    <source>
    </source>
</evidence>
<evidence type="ECO:0000305" key="8">
    <source>
    </source>
</evidence>
<gene>
    <name evidence="6" type="primary">tpcE</name>
    <name evidence="7" type="synonym">tynE</name>
    <name type="ORF">AFUA_4G14540</name>
</gene>
<proteinExistence type="evidence at transcript level"/>
<protein>
    <recommendedName>
        <fullName evidence="6">Trypacidin cluster transcription factor</fullName>
    </recommendedName>
    <alternativeName>
        <fullName evidence="6">Trypacidin synthesis protein E</fullName>
    </alternativeName>
</protein>